<organism>
    <name type="scientific">Listeria monocytogenes serovar 1/2a (strain ATCC BAA-679 / EGD-e)</name>
    <dbReference type="NCBI Taxonomy" id="169963"/>
    <lineage>
        <taxon>Bacteria</taxon>
        <taxon>Bacillati</taxon>
        <taxon>Bacillota</taxon>
        <taxon>Bacilli</taxon>
        <taxon>Bacillales</taxon>
        <taxon>Listeriaceae</taxon>
        <taxon>Listeria</taxon>
    </lineage>
</organism>
<proteinExistence type="inferred from homology"/>
<keyword id="KW-0560">Oxidoreductase</keyword>
<keyword id="KW-1185">Reference proteome</keyword>
<dbReference type="EC" id="1.8.4.11" evidence="1"/>
<dbReference type="EMBL" id="AL591981">
    <property type="protein sequence ID" value="CAC99938.1"/>
    <property type="molecule type" value="Genomic_DNA"/>
</dbReference>
<dbReference type="PIR" id="AD1307">
    <property type="entry name" value="AD1307"/>
</dbReference>
<dbReference type="RefSeq" id="NP_465385.1">
    <property type="nucleotide sequence ID" value="NC_003210.1"/>
</dbReference>
<dbReference type="RefSeq" id="WP_003723414.1">
    <property type="nucleotide sequence ID" value="NZ_CP149495.1"/>
</dbReference>
<dbReference type="SMR" id="Q8Y640"/>
<dbReference type="STRING" id="169963.gene:17594545"/>
<dbReference type="PaxDb" id="169963-lmo1860"/>
<dbReference type="EnsemblBacteria" id="CAC99938">
    <property type="protein sequence ID" value="CAC99938"/>
    <property type="gene ID" value="CAC99938"/>
</dbReference>
<dbReference type="GeneID" id="985835"/>
<dbReference type="KEGG" id="lmo:lmo1860"/>
<dbReference type="PATRIC" id="fig|169963.11.peg.1905"/>
<dbReference type="eggNOG" id="COG0225">
    <property type="taxonomic scope" value="Bacteria"/>
</dbReference>
<dbReference type="HOGENOM" id="CLU_031040_10_1_9"/>
<dbReference type="OrthoDB" id="4174719at2"/>
<dbReference type="PhylomeDB" id="Q8Y640"/>
<dbReference type="BioCyc" id="LMON169963:LMO1860-MONOMER"/>
<dbReference type="Proteomes" id="UP000000817">
    <property type="component" value="Chromosome"/>
</dbReference>
<dbReference type="GO" id="GO:0033744">
    <property type="term" value="F:L-methionine:thioredoxin-disulfide S-oxidoreductase activity"/>
    <property type="evidence" value="ECO:0007669"/>
    <property type="project" value="RHEA"/>
</dbReference>
<dbReference type="GO" id="GO:0008113">
    <property type="term" value="F:peptide-methionine (S)-S-oxide reductase activity"/>
    <property type="evidence" value="ECO:0007669"/>
    <property type="project" value="UniProtKB-UniRule"/>
</dbReference>
<dbReference type="GO" id="GO:0036211">
    <property type="term" value="P:protein modification process"/>
    <property type="evidence" value="ECO:0007669"/>
    <property type="project" value="UniProtKB-UniRule"/>
</dbReference>
<dbReference type="FunFam" id="3.30.1060.10:FF:000003">
    <property type="entry name" value="Peptide methionine sulfoxide reductase MsrA"/>
    <property type="match status" value="1"/>
</dbReference>
<dbReference type="Gene3D" id="3.30.1060.10">
    <property type="entry name" value="Peptide methionine sulphoxide reductase MsrA"/>
    <property type="match status" value="1"/>
</dbReference>
<dbReference type="HAMAP" id="MF_01401">
    <property type="entry name" value="MsrA"/>
    <property type="match status" value="1"/>
</dbReference>
<dbReference type="InterPro" id="IPR002569">
    <property type="entry name" value="Met_Sox_Rdtase_MsrA_dom"/>
</dbReference>
<dbReference type="InterPro" id="IPR036509">
    <property type="entry name" value="Met_Sox_Rdtase_MsrA_sf"/>
</dbReference>
<dbReference type="NCBIfam" id="TIGR00401">
    <property type="entry name" value="msrA"/>
    <property type="match status" value="1"/>
</dbReference>
<dbReference type="PANTHER" id="PTHR43774">
    <property type="entry name" value="PEPTIDE METHIONINE SULFOXIDE REDUCTASE"/>
    <property type="match status" value="1"/>
</dbReference>
<dbReference type="PANTHER" id="PTHR43774:SF1">
    <property type="entry name" value="PEPTIDE METHIONINE SULFOXIDE REDUCTASE MSRA 2"/>
    <property type="match status" value="1"/>
</dbReference>
<dbReference type="Pfam" id="PF01625">
    <property type="entry name" value="PMSR"/>
    <property type="match status" value="1"/>
</dbReference>
<dbReference type="SUPFAM" id="SSF55068">
    <property type="entry name" value="Peptide methionine sulfoxide reductase"/>
    <property type="match status" value="1"/>
</dbReference>
<accession>Q8Y640</accession>
<reference key="1">
    <citation type="journal article" date="2001" name="Science">
        <title>Comparative genomics of Listeria species.</title>
        <authorList>
            <person name="Glaser P."/>
            <person name="Frangeul L."/>
            <person name="Buchrieser C."/>
            <person name="Rusniok C."/>
            <person name="Amend A."/>
            <person name="Baquero F."/>
            <person name="Berche P."/>
            <person name="Bloecker H."/>
            <person name="Brandt P."/>
            <person name="Chakraborty T."/>
            <person name="Charbit A."/>
            <person name="Chetouani F."/>
            <person name="Couve E."/>
            <person name="de Daruvar A."/>
            <person name="Dehoux P."/>
            <person name="Domann E."/>
            <person name="Dominguez-Bernal G."/>
            <person name="Duchaud E."/>
            <person name="Durant L."/>
            <person name="Dussurget O."/>
            <person name="Entian K.-D."/>
            <person name="Fsihi H."/>
            <person name="Garcia-del Portillo F."/>
            <person name="Garrido P."/>
            <person name="Gautier L."/>
            <person name="Goebel W."/>
            <person name="Gomez-Lopez N."/>
            <person name="Hain T."/>
            <person name="Hauf J."/>
            <person name="Jackson D."/>
            <person name="Jones L.-M."/>
            <person name="Kaerst U."/>
            <person name="Kreft J."/>
            <person name="Kuhn M."/>
            <person name="Kunst F."/>
            <person name="Kurapkat G."/>
            <person name="Madueno E."/>
            <person name="Maitournam A."/>
            <person name="Mata Vicente J."/>
            <person name="Ng E."/>
            <person name="Nedjari H."/>
            <person name="Nordsiek G."/>
            <person name="Novella S."/>
            <person name="de Pablos B."/>
            <person name="Perez-Diaz J.-C."/>
            <person name="Purcell R."/>
            <person name="Remmel B."/>
            <person name="Rose M."/>
            <person name="Schlueter T."/>
            <person name="Simoes N."/>
            <person name="Tierrez A."/>
            <person name="Vazquez-Boland J.-A."/>
            <person name="Voss H."/>
            <person name="Wehland J."/>
            <person name="Cossart P."/>
        </authorList>
    </citation>
    <scope>NUCLEOTIDE SEQUENCE [LARGE SCALE GENOMIC DNA]</scope>
    <source>
        <strain>ATCC BAA-679 / EGD-e</strain>
    </source>
</reference>
<name>MSRA_LISMO</name>
<evidence type="ECO:0000255" key="1">
    <source>
        <dbReference type="HAMAP-Rule" id="MF_01401"/>
    </source>
</evidence>
<gene>
    <name evidence="1" type="primary">msrA</name>
    <name type="ordered locus">lmo1860</name>
</gene>
<comment type="function">
    <text evidence="1">Has an important function as a repair enzyme for proteins that have been inactivated by oxidation. Catalyzes the reversible oxidation-reduction of methionine sulfoxide in proteins to methionine.</text>
</comment>
<comment type="catalytic activity">
    <reaction evidence="1">
        <text>L-methionyl-[protein] + [thioredoxin]-disulfide + H2O = L-methionyl-(S)-S-oxide-[protein] + [thioredoxin]-dithiol</text>
        <dbReference type="Rhea" id="RHEA:14217"/>
        <dbReference type="Rhea" id="RHEA-COMP:10698"/>
        <dbReference type="Rhea" id="RHEA-COMP:10700"/>
        <dbReference type="Rhea" id="RHEA-COMP:12313"/>
        <dbReference type="Rhea" id="RHEA-COMP:12315"/>
        <dbReference type="ChEBI" id="CHEBI:15377"/>
        <dbReference type="ChEBI" id="CHEBI:16044"/>
        <dbReference type="ChEBI" id="CHEBI:29950"/>
        <dbReference type="ChEBI" id="CHEBI:44120"/>
        <dbReference type="ChEBI" id="CHEBI:50058"/>
        <dbReference type="EC" id="1.8.4.11"/>
    </reaction>
</comment>
<comment type="catalytic activity">
    <reaction evidence="1">
        <text>[thioredoxin]-disulfide + L-methionine + H2O = L-methionine (S)-S-oxide + [thioredoxin]-dithiol</text>
        <dbReference type="Rhea" id="RHEA:19993"/>
        <dbReference type="Rhea" id="RHEA-COMP:10698"/>
        <dbReference type="Rhea" id="RHEA-COMP:10700"/>
        <dbReference type="ChEBI" id="CHEBI:15377"/>
        <dbReference type="ChEBI" id="CHEBI:29950"/>
        <dbReference type="ChEBI" id="CHEBI:50058"/>
        <dbReference type="ChEBI" id="CHEBI:57844"/>
        <dbReference type="ChEBI" id="CHEBI:58772"/>
        <dbReference type="EC" id="1.8.4.11"/>
    </reaction>
</comment>
<comment type="similarity">
    <text evidence="1">Belongs to the MsrA Met sulfoxide reductase family.</text>
</comment>
<feature type="chain" id="PRO_0000138555" description="Peptide methionine sulfoxide reductase MsrA">
    <location>
        <begin position="1"/>
        <end position="177"/>
    </location>
</feature>
<feature type="active site" evidence="1">
    <location>
        <position position="15"/>
    </location>
</feature>
<protein>
    <recommendedName>
        <fullName evidence="1">Peptide methionine sulfoxide reductase MsrA</fullName>
        <shortName evidence="1">Protein-methionine-S-oxide reductase</shortName>
        <ecNumber evidence="1">1.8.4.11</ecNumber>
    </recommendedName>
    <alternativeName>
        <fullName evidence="1">Peptide-methionine (S)-S-oxide reductase</fullName>
        <shortName evidence="1">Peptide Met(O) reductase</shortName>
    </alternativeName>
</protein>
<sequence>MTKESLEKATFAGGCFWCMVKPFDTQPGIEKVVSGYTGGHTVNPTYKEVCSGTTGHTEAIQITFDPAVFPYEKLVEVYWQQTDPTDAAGQFVDRGDSYRPVIFYHNEEQKEIAEKSKAALDASGRFKKPIVTEIAKAETFYPAEEYHQDFYKKEKAHYEGYQVASGRAAFIDANWKG</sequence>